<accession>Q32H78</accession>
<comment type="function">
    <text evidence="1">Catalyzes carboxymethyl transfer from carboxy-S-adenosyl-L-methionine (Cx-SAM) to 5-hydroxyuridine (ho5U) to form 5-carboxymethoxyuridine (cmo5U) at position 34 in tRNAs.</text>
</comment>
<comment type="catalytic activity">
    <reaction evidence="1">
        <text>carboxy-S-adenosyl-L-methionine + 5-hydroxyuridine(34) in tRNA = 5-carboxymethoxyuridine(34) in tRNA + S-adenosyl-L-homocysteine + H(+)</text>
        <dbReference type="Rhea" id="RHEA:52848"/>
        <dbReference type="Rhea" id="RHEA-COMP:13381"/>
        <dbReference type="Rhea" id="RHEA-COMP:13383"/>
        <dbReference type="ChEBI" id="CHEBI:15378"/>
        <dbReference type="ChEBI" id="CHEBI:57856"/>
        <dbReference type="ChEBI" id="CHEBI:134278"/>
        <dbReference type="ChEBI" id="CHEBI:136877"/>
        <dbReference type="ChEBI" id="CHEBI:136879"/>
    </reaction>
</comment>
<comment type="subunit">
    <text evidence="1">Homotetramer.</text>
</comment>
<comment type="similarity">
    <text evidence="1">Belongs to the class I-like SAM-binding methyltransferase superfamily. CmoB family.</text>
</comment>
<name>CMOB_SHIDS</name>
<dbReference type="EC" id="2.5.1.-" evidence="1"/>
<dbReference type="EMBL" id="CP000034">
    <property type="protein sequence ID" value="ABB61327.1"/>
    <property type="molecule type" value="Genomic_DNA"/>
</dbReference>
<dbReference type="RefSeq" id="WP_000564728.1">
    <property type="nucleotide sequence ID" value="NC_007606.1"/>
</dbReference>
<dbReference type="RefSeq" id="YP_402818.1">
    <property type="nucleotide sequence ID" value="NC_007606.1"/>
</dbReference>
<dbReference type="SMR" id="Q32H78"/>
<dbReference type="STRING" id="300267.SDY_1170"/>
<dbReference type="EnsemblBacteria" id="ABB61327">
    <property type="protein sequence ID" value="ABB61327"/>
    <property type="gene ID" value="SDY_1170"/>
</dbReference>
<dbReference type="KEGG" id="sdy:SDY_1170"/>
<dbReference type="PATRIC" id="fig|300267.13.peg.1378"/>
<dbReference type="HOGENOM" id="CLU_052665_0_0_6"/>
<dbReference type="Proteomes" id="UP000002716">
    <property type="component" value="Chromosome"/>
</dbReference>
<dbReference type="GO" id="GO:0016765">
    <property type="term" value="F:transferase activity, transferring alkyl or aryl (other than methyl) groups"/>
    <property type="evidence" value="ECO:0007669"/>
    <property type="project" value="UniProtKB-UniRule"/>
</dbReference>
<dbReference type="GO" id="GO:0002098">
    <property type="term" value="P:tRNA wobble uridine modification"/>
    <property type="evidence" value="ECO:0007669"/>
    <property type="project" value="InterPro"/>
</dbReference>
<dbReference type="CDD" id="cd02440">
    <property type="entry name" value="AdoMet_MTases"/>
    <property type="match status" value="1"/>
</dbReference>
<dbReference type="FunFam" id="3.40.50.150:FF:000080">
    <property type="entry name" value="tRNA U34 carboxymethyltransferase"/>
    <property type="match status" value="1"/>
</dbReference>
<dbReference type="Gene3D" id="3.40.50.150">
    <property type="entry name" value="Vaccinia Virus protein VP39"/>
    <property type="match status" value="1"/>
</dbReference>
<dbReference type="HAMAP" id="MF_01590">
    <property type="entry name" value="tRNA_carboxymethyltr_CmoB"/>
    <property type="match status" value="1"/>
</dbReference>
<dbReference type="InterPro" id="IPR010017">
    <property type="entry name" value="CmoB"/>
</dbReference>
<dbReference type="InterPro" id="IPR027555">
    <property type="entry name" value="Mo5U34_MeTrfas-like"/>
</dbReference>
<dbReference type="InterPro" id="IPR029063">
    <property type="entry name" value="SAM-dependent_MTases_sf"/>
</dbReference>
<dbReference type="NCBIfam" id="NF011650">
    <property type="entry name" value="PRK15068.1"/>
    <property type="match status" value="1"/>
</dbReference>
<dbReference type="NCBIfam" id="TIGR00452">
    <property type="entry name" value="tRNA 5-methoxyuridine(34)/uridine 5-oxyacetic acid(34) synthase CmoB"/>
    <property type="match status" value="1"/>
</dbReference>
<dbReference type="PANTHER" id="PTHR43861:SF3">
    <property type="entry name" value="PUTATIVE (AFU_ORTHOLOGUE AFUA_2G14390)-RELATED"/>
    <property type="match status" value="1"/>
</dbReference>
<dbReference type="PANTHER" id="PTHR43861">
    <property type="entry name" value="TRANS-ACONITATE 2-METHYLTRANSFERASE-RELATED"/>
    <property type="match status" value="1"/>
</dbReference>
<dbReference type="Pfam" id="PF08003">
    <property type="entry name" value="Methyltransf_9"/>
    <property type="match status" value="1"/>
</dbReference>
<dbReference type="SUPFAM" id="SSF53335">
    <property type="entry name" value="S-adenosyl-L-methionine-dependent methyltransferases"/>
    <property type="match status" value="1"/>
</dbReference>
<feature type="chain" id="PRO_0000313976" description="tRNA U34 carboxymethyltransferase">
    <location>
        <begin position="1"/>
        <end position="323"/>
    </location>
</feature>
<feature type="binding site" evidence="1">
    <location>
        <position position="91"/>
    </location>
    <ligand>
        <name>carboxy-S-adenosyl-L-methionine</name>
        <dbReference type="ChEBI" id="CHEBI:134278"/>
    </ligand>
</feature>
<feature type="binding site" evidence="1">
    <location>
        <position position="105"/>
    </location>
    <ligand>
        <name>carboxy-S-adenosyl-L-methionine</name>
        <dbReference type="ChEBI" id="CHEBI:134278"/>
    </ligand>
</feature>
<feature type="binding site" evidence="1">
    <location>
        <position position="110"/>
    </location>
    <ligand>
        <name>carboxy-S-adenosyl-L-methionine</name>
        <dbReference type="ChEBI" id="CHEBI:134278"/>
    </ligand>
</feature>
<feature type="binding site" evidence="1">
    <location>
        <position position="130"/>
    </location>
    <ligand>
        <name>carboxy-S-adenosyl-L-methionine</name>
        <dbReference type="ChEBI" id="CHEBI:134278"/>
    </ligand>
</feature>
<feature type="binding site" evidence="1">
    <location>
        <begin position="152"/>
        <end position="154"/>
    </location>
    <ligand>
        <name>carboxy-S-adenosyl-L-methionine</name>
        <dbReference type="ChEBI" id="CHEBI:134278"/>
    </ligand>
</feature>
<feature type="binding site" evidence="1">
    <location>
        <begin position="181"/>
        <end position="182"/>
    </location>
    <ligand>
        <name>carboxy-S-adenosyl-L-methionine</name>
        <dbReference type="ChEBI" id="CHEBI:134278"/>
    </ligand>
</feature>
<feature type="binding site" evidence="1">
    <location>
        <position position="196"/>
    </location>
    <ligand>
        <name>carboxy-S-adenosyl-L-methionine</name>
        <dbReference type="ChEBI" id="CHEBI:134278"/>
    </ligand>
</feature>
<feature type="binding site" evidence="1">
    <location>
        <position position="200"/>
    </location>
    <ligand>
        <name>carboxy-S-adenosyl-L-methionine</name>
        <dbReference type="ChEBI" id="CHEBI:134278"/>
    </ligand>
</feature>
<feature type="binding site" evidence="1">
    <location>
        <position position="315"/>
    </location>
    <ligand>
        <name>carboxy-S-adenosyl-L-methionine</name>
        <dbReference type="ChEBI" id="CHEBI:134278"/>
    </ligand>
</feature>
<organism>
    <name type="scientific">Shigella dysenteriae serotype 1 (strain Sd197)</name>
    <dbReference type="NCBI Taxonomy" id="300267"/>
    <lineage>
        <taxon>Bacteria</taxon>
        <taxon>Pseudomonadati</taxon>
        <taxon>Pseudomonadota</taxon>
        <taxon>Gammaproteobacteria</taxon>
        <taxon>Enterobacterales</taxon>
        <taxon>Enterobacteriaceae</taxon>
        <taxon>Shigella</taxon>
    </lineage>
</organism>
<evidence type="ECO:0000255" key="1">
    <source>
        <dbReference type="HAMAP-Rule" id="MF_01590"/>
    </source>
</evidence>
<keyword id="KW-1185">Reference proteome</keyword>
<keyword id="KW-0808">Transferase</keyword>
<keyword id="KW-0819">tRNA processing</keyword>
<reference key="1">
    <citation type="journal article" date="2005" name="Nucleic Acids Res.">
        <title>Genome dynamics and diversity of Shigella species, the etiologic agents of bacillary dysentery.</title>
        <authorList>
            <person name="Yang F."/>
            <person name="Yang J."/>
            <person name="Zhang X."/>
            <person name="Chen L."/>
            <person name="Jiang Y."/>
            <person name="Yan Y."/>
            <person name="Tang X."/>
            <person name="Wang J."/>
            <person name="Xiong Z."/>
            <person name="Dong J."/>
            <person name="Xue Y."/>
            <person name="Zhu Y."/>
            <person name="Xu X."/>
            <person name="Sun L."/>
            <person name="Chen S."/>
            <person name="Nie H."/>
            <person name="Peng J."/>
            <person name="Xu J."/>
            <person name="Wang Y."/>
            <person name="Yuan Z."/>
            <person name="Wen Y."/>
            <person name="Yao Z."/>
            <person name="Shen Y."/>
            <person name="Qiang B."/>
            <person name="Hou Y."/>
            <person name="Yu J."/>
            <person name="Jin Q."/>
        </authorList>
    </citation>
    <scope>NUCLEOTIDE SEQUENCE [LARGE SCALE GENOMIC DNA]</scope>
    <source>
        <strain>Sd197</strain>
    </source>
</reference>
<gene>
    <name evidence="1" type="primary">cmoB</name>
    <name type="ordered locus">SDY_1170</name>
</gene>
<sequence>MIDFGNFYSLIAKNHLSHWLETLPAQIANWQREQQHGLFKQWSNAVEFLPEIKPYRLDLLHSVTAESEEPLSAGQIKRIETLMRNLMPWRKGPFSLYGVNIDTEWRSDWKWDRVLPHLSDLTGRTILDVGCGSGYHMWRMIGAGAHLAVGIDPTQLFLCQFEAVRKLLGNDQRAHLLPLGIEQLPALKAFDTVFSMGVLYHRRSPLEHLWQLKDQLVNEGELVLETLVIDGDENTVLVPGDRYAQMRNVYFIPSALALKNWLKKCGFVDIRIADVSVTTTEEQRRTEWMVTESLADFLDSHDPGKTVEGYPAPKRAVLITRKP</sequence>
<protein>
    <recommendedName>
        <fullName evidence="1">tRNA U34 carboxymethyltransferase</fullName>
        <ecNumber evidence="1">2.5.1.-</ecNumber>
    </recommendedName>
</protein>
<proteinExistence type="inferred from homology"/>